<evidence type="ECO:0000255" key="1">
    <source>
        <dbReference type="HAMAP-Rule" id="MF_00531"/>
    </source>
</evidence>
<evidence type="ECO:0000305" key="2"/>
<comment type="function">
    <text evidence="1">Protein S19 forms a complex with S13 that binds strongly to the 16S ribosomal RNA.</text>
</comment>
<comment type="similarity">
    <text evidence="1">Belongs to the universal ribosomal protein uS19 family.</text>
</comment>
<accession>Q0HNT3</accession>
<name>RS19_SHESM</name>
<proteinExistence type="inferred from homology"/>
<sequence length="92" mass="10472">MPRSLKKGPFIDLHLLKKVEKAMEAGDKKPIKTWSRRSMIIPNMIGLTIAVHNGRQHVPVFVTDEMIGHKLGEFSPTRTYRGHAADKKAKKR</sequence>
<keyword id="KW-0687">Ribonucleoprotein</keyword>
<keyword id="KW-0689">Ribosomal protein</keyword>
<keyword id="KW-0694">RNA-binding</keyword>
<keyword id="KW-0699">rRNA-binding</keyword>
<reference key="1">
    <citation type="submission" date="2006-08" db="EMBL/GenBank/DDBJ databases">
        <title>Complete sequence of Shewanella sp. MR-4.</title>
        <authorList>
            <consortium name="US DOE Joint Genome Institute"/>
            <person name="Copeland A."/>
            <person name="Lucas S."/>
            <person name="Lapidus A."/>
            <person name="Barry K."/>
            <person name="Detter J.C."/>
            <person name="Glavina del Rio T."/>
            <person name="Hammon N."/>
            <person name="Israni S."/>
            <person name="Dalin E."/>
            <person name="Tice H."/>
            <person name="Pitluck S."/>
            <person name="Kiss H."/>
            <person name="Brettin T."/>
            <person name="Bruce D."/>
            <person name="Han C."/>
            <person name="Tapia R."/>
            <person name="Gilna P."/>
            <person name="Schmutz J."/>
            <person name="Larimer F."/>
            <person name="Land M."/>
            <person name="Hauser L."/>
            <person name="Kyrpides N."/>
            <person name="Mikhailova N."/>
            <person name="Nealson K."/>
            <person name="Konstantinidis K."/>
            <person name="Klappenbach J."/>
            <person name="Tiedje J."/>
            <person name="Richardson P."/>
        </authorList>
    </citation>
    <scope>NUCLEOTIDE SEQUENCE [LARGE SCALE GENOMIC DNA]</scope>
    <source>
        <strain>MR-4</strain>
    </source>
</reference>
<gene>
    <name evidence="1" type="primary">rpsS</name>
    <name type="ordered locus">Shewmr4_0203</name>
</gene>
<feature type="chain" id="PRO_0000265429" description="Small ribosomal subunit protein uS19">
    <location>
        <begin position="1"/>
        <end position="92"/>
    </location>
</feature>
<dbReference type="EMBL" id="CP000446">
    <property type="protein sequence ID" value="ABI37284.1"/>
    <property type="molecule type" value="Genomic_DNA"/>
</dbReference>
<dbReference type="RefSeq" id="WP_006083596.1">
    <property type="nucleotide sequence ID" value="NC_008321.1"/>
</dbReference>
<dbReference type="SMR" id="Q0HNT3"/>
<dbReference type="GeneID" id="94726190"/>
<dbReference type="KEGG" id="she:Shewmr4_0203"/>
<dbReference type="HOGENOM" id="CLU_144911_0_1_6"/>
<dbReference type="GO" id="GO:0005737">
    <property type="term" value="C:cytoplasm"/>
    <property type="evidence" value="ECO:0007669"/>
    <property type="project" value="UniProtKB-ARBA"/>
</dbReference>
<dbReference type="GO" id="GO:0015935">
    <property type="term" value="C:small ribosomal subunit"/>
    <property type="evidence" value="ECO:0007669"/>
    <property type="project" value="InterPro"/>
</dbReference>
<dbReference type="GO" id="GO:0019843">
    <property type="term" value="F:rRNA binding"/>
    <property type="evidence" value="ECO:0007669"/>
    <property type="project" value="UniProtKB-UniRule"/>
</dbReference>
<dbReference type="GO" id="GO:0003735">
    <property type="term" value="F:structural constituent of ribosome"/>
    <property type="evidence" value="ECO:0007669"/>
    <property type="project" value="InterPro"/>
</dbReference>
<dbReference type="GO" id="GO:0000028">
    <property type="term" value="P:ribosomal small subunit assembly"/>
    <property type="evidence" value="ECO:0007669"/>
    <property type="project" value="TreeGrafter"/>
</dbReference>
<dbReference type="GO" id="GO:0006412">
    <property type="term" value="P:translation"/>
    <property type="evidence" value="ECO:0007669"/>
    <property type="project" value="UniProtKB-UniRule"/>
</dbReference>
<dbReference type="FunFam" id="3.30.860.10:FF:000001">
    <property type="entry name" value="30S ribosomal protein S19"/>
    <property type="match status" value="1"/>
</dbReference>
<dbReference type="Gene3D" id="3.30.860.10">
    <property type="entry name" value="30s Ribosomal Protein S19, Chain A"/>
    <property type="match status" value="1"/>
</dbReference>
<dbReference type="HAMAP" id="MF_00531">
    <property type="entry name" value="Ribosomal_uS19"/>
    <property type="match status" value="1"/>
</dbReference>
<dbReference type="InterPro" id="IPR002222">
    <property type="entry name" value="Ribosomal_uS19"/>
</dbReference>
<dbReference type="InterPro" id="IPR005732">
    <property type="entry name" value="Ribosomal_uS19_bac-type"/>
</dbReference>
<dbReference type="InterPro" id="IPR020934">
    <property type="entry name" value="Ribosomal_uS19_CS"/>
</dbReference>
<dbReference type="InterPro" id="IPR023575">
    <property type="entry name" value="Ribosomal_uS19_SF"/>
</dbReference>
<dbReference type="NCBIfam" id="TIGR01050">
    <property type="entry name" value="rpsS_bact"/>
    <property type="match status" value="1"/>
</dbReference>
<dbReference type="PANTHER" id="PTHR11880">
    <property type="entry name" value="RIBOSOMAL PROTEIN S19P FAMILY MEMBER"/>
    <property type="match status" value="1"/>
</dbReference>
<dbReference type="PANTHER" id="PTHR11880:SF8">
    <property type="entry name" value="SMALL RIBOSOMAL SUBUNIT PROTEIN US19M"/>
    <property type="match status" value="1"/>
</dbReference>
<dbReference type="Pfam" id="PF00203">
    <property type="entry name" value="Ribosomal_S19"/>
    <property type="match status" value="1"/>
</dbReference>
<dbReference type="PIRSF" id="PIRSF002144">
    <property type="entry name" value="Ribosomal_S19"/>
    <property type="match status" value="1"/>
</dbReference>
<dbReference type="PRINTS" id="PR00975">
    <property type="entry name" value="RIBOSOMALS19"/>
</dbReference>
<dbReference type="SUPFAM" id="SSF54570">
    <property type="entry name" value="Ribosomal protein S19"/>
    <property type="match status" value="1"/>
</dbReference>
<dbReference type="PROSITE" id="PS00323">
    <property type="entry name" value="RIBOSOMAL_S19"/>
    <property type="match status" value="1"/>
</dbReference>
<protein>
    <recommendedName>
        <fullName evidence="1">Small ribosomal subunit protein uS19</fullName>
    </recommendedName>
    <alternativeName>
        <fullName evidence="2">30S ribosomal protein S19</fullName>
    </alternativeName>
</protein>
<organism>
    <name type="scientific">Shewanella sp. (strain MR-4)</name>
    <dbReference type="NCBI Taxonomy" id="60480"/>
    <lineage>
        <taxon>Bacteria</taxon>
        <taxon>Pseudomonadati</taxon>
        <taxon>Pseudomonadota</taxon>
        <taxon>Gammaproteobacteria</taxon>
        <taxon>Alteromonadales</taxon>
        <taxon>Shewanellaceae</taxon>
        <taxon>Shewanella</taxon>
    </lineage>
</organism>